<feature type="chain" id="PRO_0000416764" description="E3 ubiquitin-protein ligase TRIM13">
    <location>
        <begin position="1"/>
        <end position="407"/>
    </location>
</feature>
<feature type="transmembrane region" description="Helical" evidence="2">
    <location>
        <begin position="316"/>
        <end position="336"/>
    </location>
</feature>
<feature type="zinc finger region" description="RING-type" evidence="4">
    <location>
        <begin position="10"/>
        <end position="58"/>
    </location>
</feature>
<feature type="zinc finger region" description="B box-type" evidence="3">
    <location>
        <begin position="89"/>
        <end position="131"/>
    </location>
</feature>
<feature type="coiled-coil region" evidence="2">
    <location>
        <begin position="172"/>
        <end position="200"/>
    </location>
</feature>
<feature type="binding site" evidence="3">
    <location>
        <position position="94"/>
    </location>
    <ligand>
        <name>Zn(2+)</name>
        <dbReference type="ChEBI" id="CHEBI:29105"/>
    </ligand>
</feature>
<feature type="binding site" evidence="3">
    <location>
        <position position="97"/>
    </location>
    <ligand>
        <name>Zn(2+)</name>
        <dbReference type="ChEBI" id="CHEBI:29105"/>
    </ligand>
</feature>
<feature type="binding site" evidence="3">
    <location>
        <position position="117"/>
    </location>
    <ligand>
        <name>Zn(2+)</name>
        <dbReference type="ChEBI" id="CHEBI:29105"/>
    </ligand>
</feature>
<feature type="binding site" evidence="3">
    <location>
        <position position="123"/>
    </location>
    <ligand>
        <name>Zn(2+)</name>
        <dbReference type="ChEBI" id="CHEBI:29105"/>
    </ligand>
</feature>
<sequence length="407" mass="46815">MELLEEDLTCPICCSLFDDPRVLPCSHNFCKKCLEGLLEGNVRNSLWRPSPFKCPTCRKETSATGVNSLQVNYSLKGIVEKYNKIKISPKMPVCKEHLGQPLNIFCVTDMQLICGVCATRGSHTKHVFSSIEDAYTQERDAFEFLFQSFETWRRGDALSRLDTLETNKRKSLQLLTKDSDKVKEFFEKLQHTLDQKKNEILSDFETMKLAVMQTYDPEINKLNSILQEQRMAFNIAEAFKDVSEPIIFLQQMQEFREKIKVIKETPLPPSNLPTSPLMKNFDTSQWEDIKLVDVDKLSLPQDTGVLTSRSPWHPCLLLMAVVLLGLLVFFGPTVFLEWSPLEELATWKDCLSSFNSYLTKSADFVEQSVFYWEQMTDGLFVFSERVKNVSLVALNNVAEFVCKYKLL</sequence>
<comment type="function">
    <text evidence="1">Endoplasmic reticulum (ER) membrane anchored E3 ligase involved in the retrotranslocation and turnover of membrane and secretory proteins from the ER through a set of processes named ER-associated degradation (ERAD). This process acts on misfolded proteins as well as in the regulated degradation of correctly folded proteins. Enhances ionizing radiation-induced p53/TP53 stability and apoptosis via ubiquitinating MDM2 and AKT1 and decreasing AKT1 kinase activity through MDM2 and AKT1 proteasomal degradation. Regulates ER stress-induced autophagy, and may act as a tumor suppressor. Also plays a role in innate immune response by stimulating NF-kappa-B activity in the TLR2 signaling pathway. Ubiquitinates TRAF6 via the 'Lys-29'-linked polyubiquitination chain resulting in NF-kappa-B activation. Participates as well in T-cell receptor-mediated NF-kappa-B activation. In the presence of TNF, modulates the IKK complex by regulating IKBKG/NEMO ubiquitination leading to the repression of NF-kappa-B.</text>
</comment>
<comment type="catalytic activity">
    <reaction evidence="1">
        <text>S-ubiquitinyl-[E2 ubiquitin-conjugating enzyme]-L-cysteine + [acceptor protein]-L-lysine = [E2 ubiquitin-conjugating enzyme]-L-cysteine + N(6)-ubiquitinyl-[acceptor protein]-L-lysine.</text>
        <dbReference type="EC" id="2.3.2.27"/>
    </reaction>
</comment>
<comment type="pathway">
    <text evidence="1">Protein modification; protein ubiquitination.</text>
</comment>
<comment type="subunit">
    <text evidence="1">Interacts (via C-terminal domain) with VCP. Interacts with AKT1; the interaction ubiquitinates AKT1 and leads to its proteasomal degradation. Interacts with MDM2; the interaction ubiquitinates AKT1 and leads to its proteasomal degradation. Interacts with p62/SQSTM1. Interacts with TRAF6. Interacts with IKBKG/NEMO.</text>
</comment>
<comment type="subcellular location">
    <subcellularLocation>
        <location evidence="1">Endoplasmic reticulum membrane</location>
        <topology evidence="1">Single-pass membrane protein</topology>
    </subcellularLocation>
    <text evidence="1">Concentrates and colocalizes with p62/SQSTM1 and ZFYVE1 at the perinuclear endoplasmic reticulum.</text>
</comment>
<comment type="domain">
    <text evidence="1">The coiled-coil domain is required for the induction of autophagy during endoplasmic reticulum (ER) stress.</text>
</comment>
<comment type="domain">
    <text evidence="1">The RING-type zinc finger is required for auto-polyubiquitination.</text>
</comment>
<comment type="domain">
    <text evidence="1">The C-terminal transmembrane domain is indispensable for the localization to the ER.</text>
</comment>
<comment type="PTM">
    <text evidence="1">Auto-ubiquitinated; requires the RING-type zinc finger. Auto-polyubiquitination leads to proteasomal degradation.</text>
</comment>
<gene>
    <name type="primary">Trim13</name>
    <name type="synonym">Rfp2</name>
</gene>
<accession>Q5M7V1</accession>
<protein>
    <recommendedName>
        <fullName>E3 ubiquitin-protein ligase TRIM13</fullName>
        <ecNumber>2.3.2.27</ecNumber>
    </recommendedName>
    <alternativeName>
        <fullName>Putative tumor suppressor RFP2</fullName>
    </alternativeName>
    <alternativeName>
        <fullName evidence="5">RING-type E3 ubiquitin transferase TRIM13</fullName>
    </alternativeName>
    <alternativeName>
        <fullName>Ret finger protein 2</fullName>
    </alternativeName>
    <alternativeName>
        <fullName>Tripartite motif-containing protein 13</fullName>
    </alternativeName>
</protein>
<evidence type="ECO:0000250" key="1">
    <source>
        <dbReference type="UniProtKB" id="O60858"/>
    </source>
</evidence>
<evidence type="ECO:0000255" key="2"/>
<evidence type="ECO:0000255" key="3">
    <source>
        <dbReference type="PROSITE-ProRule" id="PRU00024"/>
    </source>
</evidence>
<evidence type="ECO:0000255" key="4">
    <source>
        <dbReference type="PROSITE-ProRule" id="PRU00175"/>
    </source>
</evidence>
<evidence type="ECO:0000305" key="5"/>
<reference key="1">
    <citation type="journal article" date="2004" name="Nature">
        <title>Genome sequence of the Brown Norway rat yields insights into mammalian evolution.</title>
        <authorList>
            <person name="Gibbs R.A."/>
            <person name="Weinstock G.M."/>
            <person name="Metzker M.L."/>
            <person name="Muzny D.M."/>
            <person name="Sodergren E.J."/>
            <person name="Scherer S."/>
            <person name="Scott G."/>
            <person name="Steffen D."/>
            <person name="Worley K.C."/>
            <person name="Burch P.E."/>
            <person name="Okwuonu G."/>
            <person name="Hines S."/>
            <person name="Lewis L."/>
            <person name="Deramo C."/>
            <person name="Delgado O."/>
            <person name="Dugan-Rocha S."/>
            <person name="Miner G."/>
            <person name="Morgan M."/>
            <person name="Hawes A."/>
            <person name="Gill R."/>
            <person name="Holt R.A."/>
            <person name="Adams M.D."/>
            <person name="Amanatides P.G."/>
            <person name="Baden-Tillson H."/>
            <person name="Barnstead M."/>
            <person name="Chin S."/>
            <person name="Evans C.A."/>
            <person name="Ferriera S."/>
            <person name="Fosler C."/>
            <person name="Glodek A."/>
            <person name="Gu Z."/>
            <person name="Jennings D."/>
            <person name="Kraft C.L."/>
            <person name="Nguyen T."/>
            <person name="Pfannkoch C.M."/>
            <person name="Sitter C."/>
            <person name="Sutton G.G."/>
            <person name="Venter J.C."/>
            <person name="Woodage T."/>
            <person name="Smith D."/>
            <person name="Lee H.-M."/>
            <person name="Gustafson E."/>
            <person name="Cahill P."/>
            <person name="Kana A."/>
            <person name="Doucette-Stamm L."/>
            <person name="Weinstock K."/>
            <person name="Fechtel K."/>
            <person name="Weiss R.B."/>
            <person name="Dunn D.M."/>
            <person name="Green E.D."/>
            <person name="Blakesley R.W."/>
            <person name="Bouffard G.G."/>
            <person name="De Jong P.J."/>
            <person name="Osoegawa K."/>
            <person name="Zhu B."/>
            <person name="Marra M."/>
            <person name="Schein J."/>
            <person name="Bosdet I."/>
            <person name="Fjell C."/>
            <person name="Jones S."/>
            <person name="Krzywinski M."/>
            <person name="Mathewson C."/>
            <person name="Siddiqui A."/>
            <person name="Wye N."/>
            <person name="McPherson J."/>
            <person name="Zhao S."/>
            <person name="Fraser C.M."/>
            <person name="Shetty J."/>
            <person name="Shatsman S."/>
            <person name="Geer K."/>
            <person name="Chen Y."/>
            <person name="Abramzon S."/>
            <person name="Nierman W.C."/>
            <person name="Havlak P.H."/>
            <person name="Chen R."/>
            <person name="Durbin K.J."/>
            <person name="Egan A."/>
            <person name="Ren Y."/>
            <person name="Song X.-Z."/>
            <person name="Li B."/>
            <person name="Liu Y."/>
            <person name="Qin X."/>
            <person name="Cawley S."/>
            <person name="Cooney A.J."/>
            <person name="D'Souza L.M."/>
            <person name="Martin K."/>
            <person name="Wu J.Q."/>
            <person name="Gonzalez-Garay M.L."/>
            <person name="Jackson A.R."/>
            <person name="Kalafus K.J."/>
            <person name="McLeod M.P."/>
            <person name="Milosavljevic A."/>
            <person name="Virk D."/>
            <person name="Volkov A."/>
            <person name="Wheeler D.A."/>
            <person name="Zhang Z."/>
            <person name="Bailey J.A."/>
            <person name="Eichler E.E."/>
            <person name="Tuzun E."/>
            <person name="Birney E."/>
            <person name="Mongin E."/>
            <person name="Ureta-Vidal A."/>
            <person name="Woodwark C."/>
            <person name="Zdobnov E."/>
            <person name="Bork P."/>
            <person name="Suyama M."/>
            <person name="Torrents D."/>
            <person name="Alexandersson M."/>
            <person name="Trask B.J."/>
            <person name="Young J.M."/>
            <person name="Huang H."/>
            <person name="Wang H."/>
            <person name="Xing H."/>
            <person name="Daniels S."/>
            <person name="Gietzen D."/>
            <person name="Schmidt J."/>
            <person name="Stevens K."/>
            <person name="Vitt U."/>
            <person name="Wingrove J."/>
            <person name="Camara F."/>
            <person name="Mar Alba M."/>
            <person name="Abril J.F."/>
            <person name="Guigo R."/>
            <person name="Smit A."/>
            <person name="Dubchak I."/>
            <person name="Rubin E.M."/>
            <person name="Couronne O."/>
            <person name="Poliakov A."/>
            <person name="Huebner N."/>
            <person name="Ganten D."/>
            <person name="Goesele C."/>
            <person name="Hummel O."/>
            <person name="Kreitler T."/>
            <person name="Lee Y.-A."/>
            <person name="Monti J."/>
            <person name="Schulz H."/>
            <person name="Zimdahl H."/>
            <person name="Himmelbauer H."/>
            <person name="Lehrach H."/>
            <person name="Jacob H.J."/>
            <person name="Bromberg S."/>
            <person name="Gullings-Handley J."/>
            <person name="Jensen-Seaman M.I."/>
            <person name="Kwitek A.E."/>
            <person name="Lazar J."/>
            <person name="Pasko D."/>
            <person name="Tonellato P.J."/>
            <person name="Twigger S."/>
            <person name="Ponting C.P."/>
            <person name="Duarte J.M."/>
            <person name="Rice S."/>
            <person name="Goodstadt L."/>
            <person name="Beatson S.A."/>
            <person name="Emes R.D."/>
            <person name="Winter E.E."/>
            <person name="Webber C."/>
            <person name="Brandt P."/>
            <person name="Nyakatura G."/>
            <person name="Adetobi M."/>
            <person name="Chiaromonte F."/>
            <person name="Elnitski L."/>
            <person name="Eswara P."/>
            <person name="Hardison R.C."/>
            <person name="Hou M."/>
            <person name="Kolbe D."/>
            <person name="Makova K."/>
            <person name="Miller W."/>
            <person name="Nekrutenko A."/>
            <person name="Riemer C."/>
            <person name="Schwartz S."/>
            <person name="Taylor J."/>
            <person name="Yang S."/>
            <person name="Zhang Y."/>
            <person name="Lindpaintner K."/>
            <person name="Andrews T.D."/>
            <person name="Caccamo M."/>
            <person name="Clamp M."/>
            <person name="Clarke L."/>
            <person name="Curwen V."/>
            <person name="Durbin R.M."/>
            <person name="Eyras E."/>
            <person name="Searle S.M."/>
            <person name="Cooper G.M."/>
            <person name="Batzoglou S."/>
            <person name="Brudno M."/>
            <person name="Sidow A."/>
            <person name="Stone E.A."/>
            <person name="Payseur B.A."/>
            <person name="Bourque G."/>
            <person name="Lopez-Otin C."/>
            <person name="Puente X.S."/>
            <person name="Chakrabarti K."/>
            <person name="Chatterji S."/>
            <person name="Dewey C."/>
            <person name="Pachter L."/>
            <person name="Bray N."/>
            <person name="Yap V.B."/>
            <person name="Caspi A."/>
            <person name="Tesler G."/>
            <person name="Pevzner P.A."/>
            <person name="Haussler D."/>
            <person name="Roskin K.M."/>
            <person name="Baertsch R."/>
            <person name="Clawson H."/>
            <person name="Furey T.S."/>
            <person name="Hinrichs A.S."/>
            <person name="Karolchik D."/>
            <person name="Kent W.J."/>
            <person name="Rosenbloom K.R."/>
            <person name="Trumbower H."/>
            <person name="Weirauch M."/>
            <person name="Cooper D.N."/>
            <person name="Stenson P.D."/>
            <person name="Ma B."/>
            <person name="Brent M."/>
            <person name="Arumugam M."/>
            <person name="Shteynberg D."/>
            <person name="Copley R.R."/>
            <person name="Taylor M.S."/>
            <person name="Riethman H."/>
            <person name="Mudunuri U."/>
            <person name="Peterson J."/>
            <person name="Guyer M."/>
            <person name="Felsenfeld A."/>
            <person name="Old S."/>
            <person name="Mockrin S."/>
            <person name="Collins F.S."/>
        </authorList>
    </citation>
    <scope>NUCLEOTIDE SEQUENCE [LARGE SCALE GENOMIC DNA]</scope>
    <source>
        <strain>Brown Norway</strain>
    </source>
</reference>
<reference key="2">
    <citation type="submission" date="2005-07" db="EMBL/GenBank/DDBJ databases">
        <authorList>
            <person name="Mural R.J."/>
            <person name="Adams M.D."/>
            <person name="Myers E.W."/>
            <person name="Smith H.O."/>
            <person name="Venter J.C."/>
        </authorList>
    </citation>
    <scope>NUCLEOTIDE SEQUENCE [LARGE SCALE GENOMIC DNA]</scope>
</reference>
<reference key="3">
    <citation type="journal article" date="2004" name="Genome Res.">
        <title>The status, quality, and expansion of the NIH full-length cDNA project: the Mammalian Gene Collection (MGC).</title>
        <authorList>
            <consortium name="The MGC Project Team"/>
        </authorList>
    </citation>
    <scope>NUCLEOTIDE SEQUENCE [LARGE SCALE MRNA]</scope>
    <source>
        <tissue>Lung</tissue>
    </source>
</reference>
<dbReference type="EC" id="2.3.2.27"/>
<dbReference type="EMBL" id="CH474023">
    <property type="protein sequence ID" value="EDL85281.1"/>
    <property type="molecule type" value="Genomic_DNA"/>
</dbReference>
<dbReference type="EMBL" id="BC088425">
    <property type="protein sequence ID" value="AAH88425.1"/>
    <property type="molecule type" value="mRNA"/>
</dbReference>
<dbReference type="RefSeq" id="NP_001012210.1">
    <property type="nucleotide sequence ID" value="NM_001012210.1"/>
</dbReference>
<dbReference type="RefSeq" id="XP_006252199.1">
    <property type="nucleotide sequence ID" value="XM_006252137.3"/>
</dbReference>
<dbReference type="RefSeq" id="XP_017455253.1">
    <property type="nucleotide sequence ID" value="XM_017599764.1"/>
</dbReference>
<dbReference type="RefSeq" id="XP_063130552.1">
    <property type="nucleotide sequence ID" value="XM_063274482.1"/>
</dbReference>
<dbReference type="RefSeq" id="XP_063130553.1">
    <property type="nucleotide sequence ID" value="XM_063274483.1"/>
</dbReference>
<dbReference type="RefSeq" id="XP_063130554.1">
    <property type="nucleotide sequence ID" value="XM_063274484.1"/>
</dbReference>
<dbReference type="SMR" id="Q5M7V1"/>
<dbReference type="BioGRID" id="264747">
    <property type="interactions" value="1"/>
</dbReference>
<dbReference type="FunCoup" id="Q5M7V1">
    <property type="interactions" value="1807"/>
</dbReference>
<dbReference type="STRING" id="10116.ENSRNOP00000012035"/>
<dbReference type="PhosphoSitePlus" id="Q5M7V1"/>
<dbReference type="PaxDb" id="10116-ENSRNOP00000012035"/>
<dbReference type="Ensembl" id="ENSRNOT00000107093.1">
    <property type="protein sequence ID" value="ENSRNOP00000096302.1"/>
    <property type="gene ID" value="ENSRNOG00000009075.5"/>
</dbReference>
<dbReference type="Ensembl" id="ENSRNOT00000109510.1">
    <property type="protein sequence ID" value="ENSRNOP00000092048.1"/>
    <property type="gene ID" value="ENSRNOG00000009075.5"/>
</dbReference>
<dbReference type="Ensembl" id="ENSRNOT00000112782.1">
    <property type="protein sequence ID" value="ENSRNOP00000078168.1"/>
    <property type="gene ID" value="ENSRNOG00000009075.5"/>
</dbReference>
<dbReference type="Ensembl" id="ENSRNOT00000116555.1">
    <property type="protein sequence ID" value="ENSRNOP00000086916.1"/>
    <property type="gene ID" value="ENSRNOG00000009075.5"/>
</dbReference>
<dbReference type="GeneID" id="364398"/>
<dbReference type="KEGG" id="rno:364398"/>
<dbReference type="UCSC" id="RGD:1307609">
    <property type="organism name" value="rat"/>
</dbReference>
<dbReference type="AGR" id="RGD:1307609"/>
<dbReference type="CTD" id="10206"/>
<dbReference type="RGD" id="1307609">
    <property type="gene designation" value="Trim13"/>
</dbReference>
<dbReference type="eggNOG" id="KOG2177">
    <property type="taxonomic scope" value="Eukaryota"/>
</dbReference>
<dbReference type="GeneTree" id="ENSGT00940000159715"/>
<dbReference type="HOGENOM" id="CLU_053708_0_0_1"/>
<dbReference type="InParanoid" id="Q5M7V1"/>
<dbReference type="OrthoDB" id="6105938at2759"/>
<dbReference type="PhylomeDB" id="Q5M7V1"/>
<dbReference type="TreeFam" id="TF331669"/>
<dbReference type="UniPathway" id="UPA00143"/>
<dbReference type="PRO" id="PR:Q5M7V1"/>
<dbReference type="Proteomes" id="UP000002494">
    <property type="component" value="Chromosome 15"/>
</dbReference>
<dbReference type="Proteomes" id="UP000234681">
    <property type="component" value="Chromosome 15"/>
</dbReference>
<dbReference type="Bgee" id="ENSRNOG00000009075">
    <property type="expression patterns" value="Expressed in lung and 19 other cell types or tissues"/>
</dbReference>
<dbReference type="GO" id="GO:0005737">
    <property type="term" value="C:cytoplasm"/>
    <property type="evidence" value="ECO:0000266"/>
    <property type="project" value="RGD"/>
</dbReference>
<dbReference type="GO" id="GO:0005789">
    <property type="term" value="C:endoplasmic reticulum membrane"/>
    <property type="evidence" value="ECO:0000266"/>
    <property type="project" value="RGD"/>
</dbReference>
<dbReference type="GO" id="GO:0097038">
    <property type="term" value="C:perinuclear endoplasmic reticulum"/>
    <property type="evidence" value="ECO:0000266"/>
    <property type="project" value="RGD"/>
</dbReference>
<dbReference type="GO" id="GO:0003713">
    <property type="term" value="F:transcription coactivator activity"/>
    <property type="evidence" value="ECO:0000266"/>
    <property type="project" value="RGD"/>
</dbReference>
<dbReference type="GO" id="GO:0061630">
    <property type="term" value="F:ubiquitin protein ligase activity"/>
    <property type="evidence" value="ECO:0000318"/>
    <property type="project" value="GO_Central"/>
</dbReference>
<dbReference type="GO" id="GO:0061659">
    <property type="term" value="F:ubiquitin-like protein ligase activity"/>
    <property type="evidence" value="ECO:0000266"/>
    <property type="project" value="RGD"/>
</dbReference>
<dbReference type="GO" id="GO:0004842">
    <property type="term" value="F:ubiquitin-protein transferase activity"/>
    <property type="evidence" value="ECO:0000266"/>
    <property type="project" value="RGD"/>
</dbReference>
<dbReference type="GO" id="GO:0008270">
    <property type="term" value="F:zinc ion binding"/>
    <property type="evidence" value="ECO:0007669"/>
    <property type="project" value="UniProtKB-KW"/>
</dbReference>
<dbReference type="GO" id="GO:0036503">
    <property type="term" value="P:ERAD pathway"/>
    <property type="evidence" value="ECO:0000266"/>
    <property type="project" value="RGD"/>
</dbReference>
<dbReference type="GO" id="GO:0045087">
    <property type="term" value="P:innate immune response"/>
    <property type="evidence" value="ECO:0000266"/>
    <property type="project" value="RGD"/>
</dbReference>
<dbReference type="GO" id="GO:0032897">
    <property type="term" value="P:negative regulation of viral transcription"/>
    <property type="evidence" value="ECO:0000266"/>
    <property type="project" value="RGD"/>
</dbReference>
<dbReference type="GO" id="GO:0043123">
    <property type="term" value="P:positive regulation of canonical NF-kappaB signal transduction"/>
    <property type="evidence" value="ECO:0000266"/>
    <property type="project" value="RGD"/>
</dbReference>
<dbReference type="GO" id="GO:0016239">
    <property type="term" value="P:positive regulation of macroautophagy"/>
    <property type="evidence" value="ECO:0000266"/>
    <property type="project" value="RGD"/>
</dbReference>
<dbReference type="GO" id="GO:0043161">
    <property type="term" value="P:proteasome-mediated ubiquitin-dependent protein catabolic process"/>
    <property type="evidence" value="ECO:0000266"/>
    <property type="project" value="RGD"/>
</dbReference>
<dbReference type="GO" id="GO:0051865">
    <property type="term" value="P:protein autoubiquitination"/>
    <property type="evidence" value="ECO:0000266"/>
    <property type="project" value="RGD"/>
</dbReference>
<dbReference type="GO" id="GO:0044790">
    <property type="term" value="P:suppression of viral release by host"/>
    <property type="evidence" value="ECO:0000266"/>
    <property type="project" value="RGD"/>
</dbReference>
<dbReference type="CDD" id="cd19767">
    <property type="entry name" value="Bbox2_TRIM13_C-XI"/>
    <property type="match status" value="1"/>
</dbReference>
<dbReference type="CDD" id="cd16762">
    <property type="entry name" value="RING-HC_TRIM13_C-V"/>
    <property type="match status" value="1"/>
</dbReference>
<dbReference type="FunFam" id="3.30.40.10:FF:000386">
    <property type="entry name" value="E3 ubiquitin-protein ligase TRIM13"/>
    <property type="match status" value="1"/>
</dbReference>
<dbReference type="Gene3D" id="3.30.160.60">
    <property type="entry name" value="Classic Zinc Finger"/>
    <property type="match status" value="1"/>
</dbReference>
<dbReference type="Gene3D" id="3.30.40.10">
    <property type="entry name" value="Zinc/RING finger domain, C3HC4 (zinc finger)"/>
    <property type="match status" value="1"/>
</dbReference>
<dbReference type="InterPro" id="IPR050143">
    <property type="entry name" value="TRIM/RBCC"/>
</dbReference>
<dbReference type="InterPro" id="IPR027370">
    <property type="entry name" value="Znf-RING_euk"/>
</dbReference>
<dbReference type="InterPro" id="IPR000315">
    <property type="entry name" value="Znf_B-box"/>
</dbReference>
<dbReference type="InterPro" id="IPR001841">
    <property type="entry name" value="Znf_RING"/>
</dbReference>
<dbReference type="InterPro" id="IPR013083">
    <property type="entry name" value="Znf_RING/FYVE/PHD"/>
</dbReference>
<dbReference type="InterPro" id="IPR017907">
    <property type="entry name" value="Znf_RING_CS"/>
</dbReference>
<dbReference type="PANTHER" id="PTHR24103">
    <property type="entry name" value="E3 UBIQUITIN-PROTEIN LIGASE TRIM"/>
    <property type="match status" value="1"/>
</dbReference>
<dbReference type="Pfam" id="PF00643">
    <property type="entry name" value="zf-B_box"/>
    <property type="match status" value="1"/>
</dbReference>
<dbReference type="Pfam" id="PF13445">
    <property type="entry name" value="zf-RING_UBOX"/>
    <property type="match status" value="1"/>
</dbReference>
<dbReference type="SMART" id="SM00336">
    <property type="entry name" value="BBOX"/>
    <property type="match status" value="1"/>
</dbReference>
<dbReference type="SMART" id="SM00184">
    <property type="entry name" value="RING"/>
    <property type="match status" value="1"/>
</dbReference>
<dbReference type="SUPFAM" id="SSF57845">
    <property type="entry name" value="B-box zinc-binding domain"/>
    <property type="match status" value="1"/>
</dbReference>
<dbReference type="SUPFAM" id="SSF57850">
    <property type="entry name" value="RING/U-box"/>
    <property type="match status" value="1"/>
</dbReference>
<dbReference type="PROSITE" id="PS50119">
    <property type="entry name" value="ZF_BBOX"/>
    <property type="match status" value="1"/>
</dbReference>
<dbReference type="PROSITE" id="PS00518">
    <property type="entry name" value="ZF_RING_1"/>
    <property type="match status" value="1"/>
</dbReference>
<dbReference type="PROSITE" id="PS50089">
    <property type="entry name" value="ZF_RING_2"/>
    <property type="match status" value="1"/>
</dbReference>
<organism>
    <name type="scientific">Rattus norvegicus</name>
    <name type="common">Rat</name>
    <dbReference type="NCBI Taxonomy" id="10116"/>
    <lineage>
        <taxon>Eukaryota</taxon>
        <taxon>Metazoa</taxon>
        <taxon>Chordata</taxon>
        <taxon>Craniata</taxon>
        <taxon>Vertebrata</taxon>
        <taxon>Euteleostomi</taxon>
        <taxon>Mammalia</taxon>
        <taxon>Eutheria</taxon>
        <taxon>Euarchontoglires</taxon>
        <taxon>Glires</taxon>
        <taxon>Rodentia</taxon>
        <taxon>Myomorpha</taxon>
        <taxon>Muroidea</taxon>
        <taxon>Muridae</taxon>
        <taxon>Murinae</taxon>
        <taxon>Rattus</taxon>
    </lineage>
</organism>
<proteinExistence type="evidence at transcript level"/>
<name>TRI13_RAT</name>
<keyword id="KW-0175">Coiled coil</keyword>
<keyword id="KW-0256">Endoplasmic reticulum</keyword>
<keyword id="KW-0391">Immunity</keyword>
<keyword id="KW-0399">Innate immunity</keyword>
<keyword id="KW-0472">Membrane</keyword>
<keyword id="KW-0479">Metal-binding</keyword>
<keyword id="KW-1185">Reference proteome</keyword>
<keyword id="KW-0808">Transferase</keyword>
<keyword id="KW-0812">Transmembrane</keyword>
<keyword id="KW-1133">Transmembrane helix</keyword>
<keyword id="KW-0832">Ubl conjugation</keyword>
<keyword id="KW-0833">Ubl conjugation pathway</keyword>
<keyword id="KW-0862">Zinc</keyword>
<keyword id="KW-0863">Zinc-finger</keyword>